<dbReference type="EMBL" id="CR628336">
    <property type="protein sequence ID" value="CAH11941.1"/>
    <property type="molecule type" value="Genomic_DNA"/>
</dbReference>
<dbReference type="RefSeq" id="WP_011213300.1">
    <property type="nucleotide sequence ID" value="NC_006368.1"/>
</dbReference>
<dbReference type="SMR" id="Q5X720"/>
<dbReference type="GeneID" id="57034720"/>
<dbReference type="KEGG" id="lpp:lpp0793"/>
<dbReference type="LegioList" id="lpp0793"/>
<dbReference type="HOGENOM" id="CLU_087843_4_1_6"/>
<dbReference type="GO" id="GO:0005829">
    <property type="term" value="C:cytosol"/>
    <property type="evidence" value="ECO:0007669"/>
    <property type="project" value="TreeGrafter"/>
</dbReference>
<dbReference type="GO" id="GO:0003723">
    <property type="term" value="F:RNA binding"/>
    <property type="evidence" value="ECO:0007669"/>
    <property type="project" value="UniProtKB-UniRule"/>
</dbReference>
<dbReference type="GO" id="GO:0006353">
    <property type="term" value="P:DNA-templated transcription termination"/>
    <property type="evidence" value="ECO:0007669"/>
    <property type="project" value="UniProtKB-UniRule"/>
</dbReference>
<dbReference type="GO" id="GO:0031564">
    <property type="term" value="P:transcription antitermination"/>
    <property type="evidence" value="ECO:0007669"/>
    <property type="project" value="UniProtKB-KW"/>
</dbReference>
<dbReference type="Gene3D" id="1.10.940.10">
    <property type="entry name" value="NusB-like"/>
    <property type="match status" value="1"/>
</dbReference>
<dbReference type="HAMAP" id="MF_00073">
    <property type="entry name" value="NusB"/>
    <property type="match status" value="1"/>
</dbReference>
<dbReference type="InterPro" id="IPR035926">
    <property type="entry name" value="NusB-like_sf"/>
</dbReference>
<dbReference type="InterPro" id="IPR011605">
    <property type="entry name" value="NusB_fam"/>
</dbReference>
<dbReference type="InterPro" id="IPR006027">
    <property type="entry name" value="NusB_RsmB_TIM44"/>
</dbReference>
<dbReference type="NCBIfam" id="TIGR01951">
    <property type="entry name" value="nusB"/>
    <property type="match status" value="1"/>
</dbReference>
<dbReference type="PANTHER" id="PTHR11078:SF3">
    <property type="entry name" value="ANTITERMINATION NUSB DOMAIN-CONTAINING PROTEIN"/>
    <property type="match status" value="1"/>
</dbReference>
<dbReference type="PANTHER" id="PTHR11078">
    <property type="entry name" value="N UTILIZATION SUBSTANCE PROTEIN B-RELATED"/>
    <property type="match status" value="1"/>
</dbReference>
<dbReference type="Pfam" id="PF01029">
    <property type="entry name" value="NusB"/>
    <property type="match status" value="1"/>
</dbReference>
<dbReference type="SUPFAM" id="SSF48013">
    <property type="entry name" value="NusB-like"/>
    <property type="match status" value="1"/>
</dbReference>
<feature type="chain" id="PRO_0000265538" description="Transcription antitermination protein NusB">
    <location>
        <begin position="1"/>
        <end position="147"/>
    </location>
</feature>
<organism>
    <name type="scientific">Legionella pneumophila (strain Paris)</name>
    <dbReference type="NCBI Taxonomy" id="297246"/>
    <lineage>
        <taxon>Bacteria</taxon>
        <taxon>Pseudomonadati</taxon>
        <taxon>Pseudomonadota</taxon>
        <taxon>Gammaproteobacteria</taxon>
        <taxon>Legionellales</taxon>
        <taxon>Legionellaceae</taxon>
        <taxon>Legionella</taxon>
    </lineage>
</organism>
<accession>Q5X720</accession>
<sequence length="147" mass="16968">MEKQSIRGKRRARKFALQALYQWLMSGTDLHEIEAQFRTINNMDKVDGEYFCRLLYGIPTHVEALEASLLPYLDREINALNPIELTVLRIGSFELFHCPEIPYKVILDESVSLTKEFGSQEGYRYVNGVLNNLAKQVRSVEVSLDNE</sequence>
<proteinExistence type="inferred from homology"/>
<gene>
    <name evidence="1" type="primary">nusB</name>
    <name type="ordered locus">lpp0793</name>
</gene>
<evidence type="ECO:0000255" key="1">
    <source>
        <dbReference type="HAMAP-Rule" id="MF_00073"/>
    </source>
</evidence>
<name>NUSB_LEGPA</name>
<reference key="1">
    <citation type="journal article" date="2004" name="Nat. Genet.">
        <title>Evidence in the Legionella pneumophila genome for exploitation of host cell functions and high genome plasticity.</title>
        <authorList>
            <person name="Cazalet C."/>
            <person name="Rusniok C."/>
            <person name="Brueggemann H."/>
            <person name="Zidane N."/>
            <person name="Magnier A."/>
            <person name="Ma L."/>
            <person name="Tichit M."/>
            <person name="Jarraud S."/>
            <person name="Bouchier C."/>
            <person name="Vandenesch F."/>
            <person name="Kunst F."/>
            <person name="Etienne J."/>
            <person name="Glaser P."/>
            <person name="Buchrieser C."/>
        </authorList>
    </citation>
    <scope>NUCLEOTIDE SEQUENCE [LARGE SCALE GENOMIC DNA]</scope>
    <source>
        <strain>Paris</strain>
    </source>
</reference>
<keyword id="KW-0694">RNA-binding</keyword>
<keyword id="KW-0804">Transcription</keyword>
<keyword id="KW-0889">Transcription antitermination</keyword>
<keyword id="KW-0805">Transcription regulation</keyword>
<comment type="function">
    <text evidence="1">Involved in transcription antitermination. Required for transcription of ribosomal RNA (rRNA) genes. Binds specifically to the boxA antiterminator sequence of the ribosomal RNA (rrn) operons.</text>
</comment>
<comment type="similarity">
    <text evidence="1">Belongs to the NusB family.</text>
</comment>
<protein>
    <recommendedName>
        <fullName evidence="1">Transcription antitermination protein NusB</fullName>
    </recommendedName>
    <alternativeName>
        <fullName evidence="1">Antitermination factor NusB</fullName>
    </alternativeName>
</protein>